<name>FIXA_ECO57</name>
<feature type="chain" id="PRO_0000167894" description="Protein FixA">
    <location>
        <begin position="1"/>
        <end position="256"/>
    </location>
</feature>
<organism>
    <name type="scientific">Escherichia coli O157:H7</name>
    <dbReference type="NCBI Taxonomy" id="83334"/>
    <lineage>
        <taxon>Bacteria</taxon>
        <taxon>Pseudomonadati</taxon>
        <taxon>Pseudomonadota</taxon>
        <taxon>Gammaproteobacteria</taxon>
        <taxon>Enterobacterales</taxon>
        <taxon>Enterobacteriaceae</taxon>
        <taxon>Escherichia</taxon>
    </lineage>
</organism>
<proteinExistence type="inferred from homology"/>
<sequence length="256" mass="27144">MKIITCYKCVPDEQDIAVNNADGSLDFSKADAKISQYDLNAIEAACQLKQQAAEAQVTALSVGGKALTNAKGRKDVLSRGPDELIVVIDDQFEQALPQQTASALAAAAQKAGFDLILCGDGSSDLYAQQVGLLVGEILNIPAVNGVSKIISLTADTLTVERELEDETETLSIPLPAVVAVSTDINSPQIPSMKAILGAAKKPVQVWSAADIGFNAEAAWSEQQVAAPKQRERQRIVIEGDGEEQIAAFAENLRKVI</sequence>
<keyword id="KW-0249">Electron transport</keyword>
<keyword id="KW-1185">Reference proteome</keyword>
<keyword id="KW-0813">Transport</keyword>
<dbReference type="EMBL" id="AE005174">
    <property type="protein sequence ID" value="AAG54344.1"/>
    <property type="status" value="ALT_INIT"/>
    <property type="molecule type" value="Genomic_DNA"/>
</dbReference>
<dbReference type="EMBL" id="BA000007">
    <property type="protein sequence ID" value="BAB33467.1"/>
    <property type="status" value="ALT_INIT"/>
    <property type="molecule type" value="Genomic_DNA"/>
</dbReference>
<dbReference type="RefSeq" id="NP_308071.2">
    <property type="nucleotide sequence ID" value="NC_002695.1"/>
</dbReference>
<dbReference type="RefSeq" id="WP_000692204.1">
    <property type="nucleotide sequence ID" value="NZ_VOAI01000002.1"/>
</dbReference>
<dbReference type="SMR" id="P60567"/>
<dbReference type="STRING" id="155864.Z0047"/>
<dbReference type="GeneID" id="913441"/>
<dbReference type="KEGG" id="ece:Z0047"/>
<dbReference type="KEGG" id="ecs:ECs_0044"/>
<dbReference type="PATRIC" id="fig|386585.9.peg.143"/>
<dbReference type="eggNOG" id="COG2086">
    <property type="taxonomic scope" value="Bacteria"/>
</dbReference>
<dbReference type="HOGENOM" id="CLU_060196_2_2_6"/>
<dbReference type="UniPathway" id="UPA00117"/>
<dbReference type="Proteomes" id="UP000000558">
    <property type="component" value="Chromosome"/>
</dbReference>
<dbReference type="Proteomes" id="UP000002519">
    <property type="component" value="Chromosome"/>
</dbReference>
<dbReference type="GO" id="GO:0009055">
    <property type="term" value="F:electron transfer activity"/>
    <property type="evidence" value="ECO:0007669"/>
    <property type="project" value="InterPro"/>
</dbReference>
<dbReference type="GO" id="GO:0009437">
    <property type="term" value="P:carnitine metabolic process"/>
    <property type="evidence" value="ECO:0007669"/>
    <property type="project" value="UniProtKB-UniRule"/>
</dbReference>
<dbReference type="CDD" id="cd01714">
    <property type="entry name" value="ETF_beta"/>
    <property type="match status" value="1"/>
</dbReference>
<dbReference type="FunFam" id="3.40.50.620:FF:000072">
    <property type="entry name" value="Protein FixA homolog"/>
    <property type="match status" value="1"/>
</dbReference>
<dbReference type="Gene3D" id="3.40.50.620">
    <property type="entry name" value="HUPs"/>
    <property type="match status" value="1"/>
</dbReference>
<dbReference type="HAMAP" id="MF_01055">
    <property type="entry name" value="FixA"/>
    <property type="match status" value="1"/>
</dbReference>
<dbReference type="InterPro" id="IPR000049">
    <property type="entry name" value="ET-Flavoprotein_bsu_CS"/>
</dbReference>
<dbReference type="InterPro" id="IPR014730">
    <property type="entry name" value="ETF_a/b_N"/>
</dbReference>
<dbReference type="InterPro" id="IPR012255">
    <property type="entry name" value="ETF_b"/>
</dbReference>
<dbReference type="InterPro" id="IPR033948">
    <property type="entry name" value="ETF_beta_N"/>
</dbReference>
<dbReference type="InterPro" id="IPR023463">
    <property type="entry name" value="FixA"/>
</dbReference>
<dbReference type="InterPro" id="IPR014729">
    <property type="entry name" value="Rossmann-like_a/b/a_fold"/>
</dbReference>
<dbReference type="NCBIfam" id="NF002888">
    <property type="entry name" value="PRK03359.1"/>
    <property type="match status" value="1"/>
</dbReference>
<dbReference type="PANTHER" id="PTHR21294">
    <property type="entry name" value="ELECTRON TRANSFER FLAVOPROTEIN BETA-SUBUNIT"/>
    <property type="match status" value="1"/>
</dbReference>
<dbReference type="PANTHER" id="PTHR21294:SF17">
    <property type="entry name" value="PROTEIN FIXA"/>
    <property type="match status" value="1"/>
</dbReference>
<dbReference type="Pfam" id="PF01012">
    <property type="entry name" value="ETF"/>
    <property type="match status" value="1"/>
</dbReference>
<dbReference type="PIRSF" id="PIRSF000090">
    <property type="entry name" value="Beta-ETF"/>
    <property type="match status" value="1"/>
</dbReference>
<dbReference type="SMART" id="SM00893">
    <property type="entry name" value="ETF"/>
    <property type="match status" value="1"/>
</dbReference>
<dbReference type="SUPFAM" id="SSF52402">
    <property type="entry name" value="Adenine nucleotide alpha hydrolases-like"/>
    <property type="match status" value="1"/>
</dbReference>
<dbReference type="PROSITE" id="PS01065">
    <property type="entry name" value="ETF_BETA"/>
    <property type="match status" value="1"/>
</dbReference>
<reference key="1">
    <citation type="journal article" date="2001" name="Nature">
        <title>Genome sequence of enterohaemorrhagic Escherichia coli O157:H7.</title>
        <authorList>
            <person name="Perna N.T."/>
            <person name="Plunkett G. III"/>
            <person name="Burland V."/>
            <person name="Mau B."/>
            <person name="Glasner J.D."/>
            <person name="Rose D.J."/>
            <person name="Mayhew G.F."/>
            <person name="Evans P.S."/>
            <person name="Gregor J."/>
            <person name="Kirkpatrick H.A."/>
            <person name="Posfai G."/>
            <person name="Hackett J."/>
            <person name="Klink S."/>
            <person name="Boutin A."/>
            <person name="Shao Y."/>
            <person name="Miller L."/>
            <person name="Grotbeck E.J."/>
            <person name="Davis N.W."/>
            <person name="Lim A."/>
            <person name="Dimalanta E.T."/>
            <person name="Potamousis K."/>
            <person name="Apodaca J."/>
            <person name="Anantharaman T.S."/>
            <person name="Lin J."/>
            <person name="Yen G."/>
            <person name="Schwartz D.C."/>
            <person name="Welch R.A."/>
            <person name="Blattner F.R."/>
        </authorList>
    </citation>
    <scope>NUCLEOTIDE SEQUENCE [LARGE SCALE GENOMIC DNA]</scope>
    <source>
        <strain>O157:H7 / EDL933 / ATCC 700927 / EHEC</strain>
    </source>
</reference>
<reference key="2">
    <citation type="journal article" date="2001" name="DNA Res.">
        <title>Complete genome sequence of enterohemorrhagic Escherichia coli O157:H7 and genomic comparison with a laboratory strain K-12.</title>
        <authorList>
            <person name="Hayashi T."/>
            <person name="Makino K."/>
            <person name="Ohnishi M."/>
            <person name="Kurokawa K."/>
            <person name="Ishii K."/>
            <person name="Yokoyama K."/>
            <person name="Han C.-G."/>
            <person name="Ohtsubo E."/>
            <person name="Nakayama K."/>
            <person name="Murata T."/>
            <person name="Tanaka M."/>
            <person name="Tobe T."/>
            <person name="Iida T."/>
            <person name="Takami H."/>
            <person name="Honda T."/>
            <person name="Sasakawa C."/>
            <person name="Ogasawara N."/>
            <person name="Yasunaga T."/>
            <person name="Kuhara S."/>
            <person name="Shiba T."/>
            <person name="Hattori M."/>
            <person name="Shinagawa H."/>
        </authorList>
    </citation>
    <scope>NUCLEOTIDE SEQUENCE [LARGE SCALE GENOMIC DNA]</scope>
    <source>
        <strain>O157:H7 / Sakai / RIMD 0509952 / EHEC</strain>
    </source>
</reference>
<comment type="function">
    <text evidence="1">Required for anaerobic carnitine reduction. May bring reductant to CaiA (By similarity).</text>
</comment>
<comment type="pathway">
    <text>Amine and polyamine metabolism; carnitine metabolism.</text>
</comment>
<comment type="subunit">
    <text evidence="1">Heterodimer of FixA and FixB.</text>
</comment>
<comment type="similarity">
    <text evidence="2">Belongs to the ETF beta-subunit/FixA family.</text>
</comment>
<comment type="sequence caution" evidence="2">
    <conflict type="erroneous initiation">
        <sequence resource="EMBL-CDS" id="AAG54344"/>
    </conflict>
</comment>
<comment type="sequence caution" evidence="2">
    <conflict type="erroneous initiation">
        <sequence resource="EMBL-CDS" id="BAB33467"/>
    </conflict>
</comment>
<protein>
    <recommendedName>
        <fullName>Protein FixA</fullName>
    </recommendedName>
</protein>
<evidence type="ECO:0000250" key="1"/>
<evidence type="ECO:0000305" key="2"/>
<gene>
    <name type="primary">fixA</name>
    <name type="ordered locus">Z0047</name>
    <name type="ordered locus">ECs0044</name>
</gene>
<accession>P60567</accession>
<accession>P31573</accession>
<accession>P75625</accession>
<accession>P76901</accession>
<accession>Q8XA29</accession>